<organism>
    <name type="scientific">Bradyrhizobium sp. (strain BTAi1 / ATCC BAA-1182)</name>
    <dbReference type="NCBI Taxonomy" id="288000"/>
    <lineage>
        <taxon>Bacteria</taxon>
        <taxon>Pseudomonadati</taxon>
        <taxon>Pseudomonadota</taxon>
        <taxon>Alphaproteobacteria</taxon>
        <taxon>Hyphomicrobiales</taxon>
        <taxon>Nitrobacteraceae</taxon>
        <taxon>Bradyrhizobium</taxon>
    </lineage>
</organism>
<gene>
    <name evidence="1" type="primary">secA</name>
    <name type="ordered locus">BBta_7588</name>
</gene>
<name>SECA_BRASB</name>
<evidence type="ECO:0000255" key="1">
    <source>
        <dbReference type="HAMAP-Rule" id="MF_01382"/>
    </source>
</evidence>
<evidence type="ECO:0000256" key="2">
    <source>
        <dbReference type="SAM" id="MobiDB-lite"/>
    </source>
</evidence>
<protein>
    <recommendedName>
        <fullName evidence="1">Protein translocase subunit SecA</fullName>
        <ecNumber evidence="1">7.4.2.8</ecNumber>
    </recommendedName>
</protein>
<sequence>MIGALARKLFGSANDRRVKGYQARVNAINALEPELAKLTDEQLKARTAEFKAQLAEGKTLDDILVPAFATVREASKRTLGQRHFDVQLIGGMVLHEGDIAEMKTGEGKTLVATLAVYLNALAGKGVHVVTVNDYLARRDAGWMSQIYGFLGLTTGVIVHGLDDAERKLAYACDITYGTNNEYGFDYLRDNMKYRLEDMVQRGHYFAIVDEVDSILIDEARTPLIISGPLDDRSDFYNTIDTFVPKLDKSDYDVDEKQRTVTLTEAGMEKIETLLRDAGQLKGESLYDVENVSVVHHINQALRAHTLFTRDKDYIVRDGEVVIIDEFTGRMMPGRRYSEGLHQALEAKEHVQVQPENQTLASITFQNYFRMYEKLAGMTGTAATEADELFDIYKLEVVEIPTNLPVARLDEDDEVYRTQQEKYAAILAEIERANSRLQPVLVGTASIEKSEVLAAYLKQHGYKQIDFGSERALDKLYAAARAGKPAKLFAVLNARFHEQEAYIVAEAGVPGAITIATNMAGRGTDIKLGGSLEMRIQQETAGITDETEKAAKIEQIKADIARFREIVLKAEETVEIEPAKGSKPAKTVVKPGGLYIIGSERHESRRIDNQLRGRSGRQGDPGRSKFFLSLEDDLMRIFGSDRLDSMLTRLGLKEGEAIIHPWINKALEKAQQKVEARNFDIRKNLLKFDNVQNDQRKVIFDQRVELMQDESVAETIADMRHAFIDDLVSKHVPEHAYAEQWDVAGLKEELKRVLDIELPVDEWAKEEGIADEELLKRIETHADERMAAKVGQWGPDVMRYVEKTILLQTLDHLWREHLVMLDHLRQVIGLRGYGQRDPLQEYKSEAFTLFEAMIAHLREAVTAQLMRVEIVPPEEQQPVLPPMQAHHANPTTGEDEMAFANVSLVPSSGAAPVPAEARNPNDPSTWGKVGRNEDCPCGSGKKYKHCHGRYA</sequence>
<keyword id="KW-0067">ATP-binding</keyword>
<keyword id="KW-0997">Cell inner membrane</keyword>
<keyword id="KW-1003">Cell membrane</keyword>
<keyword id="KW-0963">Cytoplasm</keyword>
<keyword id="KW-0472">Membrane</keyword>
<keyword id="KW-0479">Metal-binding</keyword>
<keyword id="KW-0547">Nucleotide-binding</keyword>
<keyword id="KW-0653">Protein transport</keyword>
<keyword id="KW-1185">Reference proteome</keyword>
<keyword id="KW-1278">Translocase</keyword>
<keyword id="KW-0811">Translocation</keyword>
<keyword id="KW-0813">Transport</keyword>
<keyword id="KW-0862">Zinc</keyword>
<proteinExistence type="inferred from homology"/>
<accession>A5ETE1</accession>
<comment type="function">
    <text evidence="1">Part of the Sec protein translocase complex. Interacts with the SecYEG preprotein conducting channel. Has a central role in coupling the hydrolysis of ATP to the transfer of proteins into and across the cell membrane, serving both as a receptor for the preprotein-SecB complex and as an ATP-driven molecular motor driving the stepwise translocation of polypeptide chains across the membrane.</text>
</comment>
<comment type="catalytic activity">
    <reaction evidence="1">
        <text>ATP + H2O + cellular proteinSide 1 = ADP + phosphate + cellular proteinSide 2.</text>
        <dbReference type="EC" id="7.4.2.8"/>
    </reaction>
</comment>
<comment type="cofactor">
    <cofactor evidence="1">
        <name>Zn(2+)</name>
        <dbReference type="ChEBI" id="CHEBI:29105"/>
    </cofactor>
    <text evidence="1">May bind 1 zinc ion per subunit.</text>
</comment>
<comment type="subunit">
    <text evidence="1">Monomer and homodimer. Part of the essential Sec protein translocation apparatus which comprises SecA, SecYEG and auxiliary proteins SecDF-YajC and YidC.</text>
</comment>
<comment type="subcellular location">
    <subcellularLocation>
        <location evidence="1">Cell inner membrane</location>
        <topology evidence="1">Peripheral membrane protein</topology>
        <orientation evidence="1">Cytoplasmic side</orientation>
    </subcellularLocation>
    <subcellularLocation>
        <location evidence="1">Cytoplasm</location>
    </subcellularLocation>
    <text evidence="1">Distribution is 50-50.</text>
</comment>
<comment type="similarity">
    <text evidence="1">Belongs to the SecA family.</text>
</comment>
<reference key="1">
    <citation type="journal article" date="2007" name="Science">
        <title>Legumes symbioses: absence of nod genes in photosynthetic bradyrhizobia.</title>
        <authorList>
            <person name="Giraud E."/>
            <person name="Moulin L."/>
            <person name="Vallenet D."/>
            <person name="Barbe V."/>
            <person name="Cytryn E."/>
            <person name="Avarre J.-C."/>
            <person name="Jaubert M."/>
            <person name="Simon D."/>
            <person name="Cartieaux F."/>
            <person name="Prin Y."/>
            <person name="Bena G."/>
            <person name="Hannibal L."/>
            <person name="Fardoux J."/>
            <person name="Kojadinovic M."/>
            <person name="Vuillet L."/>
            <person name="Lajus A."/>
            <person name="Cruveiller S."/>
            <person name="Rouy Z."/>
            <person name="Mangenot S."/>
            <person name="Segurens B."/>
            <person name="Dossat C."/>
            <person name="Franck W.L."/>
            <person name="Chang W.-S."/>
            <person name="Saunders E."/>
            <person name="Bruce D."/>
            <person name="Richardson P."/>
            <person name="Normand P."/>
            <person name="Dreyfus B."/>
            <person name="Pignol D."/>
            <person name="Stacey G."/>
            <person name="Emerich D."/>
            <person name="Vermeglio A."/>
            <person name="Medigue C."/>
            <person name="Sadowsky M."/>
        </authorList>
    </citation>
    <scope>NUCLEOTIDE SEQUENCE [LARGE SCALE GENOMIC DNA]</scope>
    <source>
        <strain>BTAi1 / ATCC BAA-1182</strain>
    </source>
</reference>
<dbReference type="EC" id="7.4.2.8" evidence="1"/>
<dbReference type="EMBL" id="CP000494">
    <property type="protein sequence ID" value="ABQ39435.1"/>
    <property type="molecule type" value="Genomic_DNA"/>
</dbReference>
<dbReference type="RefSeq" id="WP_012047326.1">
    <property type="nucleotide sequence ID" value="NC_009485.1"/>
</dbReference>
<dbReference type="SMR" id="A5ETE1"/>
<dbReference type="STRING" id="288000.BBta_7588"/>
<dbReference type="KEGG" id="bbt:BBta_7588"/>
<dbReference type="eggNOG" id="COG0653">
    <property type="taxonomic scope" value="Bacteria"/>
</dbReference>
<dbReference type="HOGENOM" id="CLU_005314_3_0_5"/>
<dbReference type="OrthoDB" id="9805579at2"/>
<dbReference type="Proteomes" id="UP000000246">
    <property type="component" value="Chromosome"/>
</dbReference>
<dbReference type="GO" id="GO:0031522">
    <property type="term" value="C:cell envelope Sec protein transport complex"/>
    <property type="evidence" value="ECO:0007669"/>
    <property type="project" value="TreeGrafter"/>
</dbReference>
<dbReference type="GO" id="GO:0005829">
    <property type="term" value="C:cytosol"/>
    <property type="evidence" value="ECO:0007669"/>
    <property type="project" value="TreeGrafter"/>
</dbReference>
<dbReference type="GO" id="GO:0005886">
    <property type="term" value="C:plasma membrane"/>
    <property type="evidence" value="ECO:0007669"/>
    <property type="project" value="UniProtKB-SubCell"/>
</dbReference>
<dbReference type="GO" id="GO:0005524">
    <property type="term" value="F:ATP binding"/>
    <property type="evidence" value="ECO:0007669"/>
    <property type="project" value="UniProtKB-UniRule"/>
</dbReference>
<dbReference type="GO" id="GO:0046872">
    <property type="term" value="F:metal ion binding"/>
    <property type="evidence" value="ECO:0007669"/>
    <property type="project" value="UniProtKB-KW"/>
</dbReference>
<dbReference type="GO" id="GO:0008564">
    <property type="term" value="F:protein-exporting ATPase activity"/>
    <property type="evidence" value="ECO:0007669"/>
    <property type="project" value="UniProtKB-EC"/>
</dbReference>
<dbReference type="GO" id="GO:0065002">
    <property type="term" value="P:intracellular protein transmembrane transport"/>
    <property type="evidence" value="ECO:0007669"/>
    <property type="project" value="UniProtKB-UniRule"/>
</dbReference>
<dbReference type="GO" id="GO:0017038">
    <property type="term" value="P:protein import"/>
    <property type="evidence" value="ECO:0007669"/>
    <property type="project" value="InterPro"/>
</dbReference>
<dbReference type="GO" id="GO:0006605">
    <property type="term" value="P:protein targeting"/>
    <property type="evidence" value="ECO:0007669"/>
    <property type="project" value="UniProtKB-UniRule"/>
</dbReference>
<dbReference type="GO" id="GO:0043952">
    <property type="term" value="P:protein transport by the Sec complex"/>
    <property type="evidence" value="ECO:0007669"/>
    <property type="project" value="TreeGrafter"/>
</dbReference>
<dbReference type="CDD" id="cd17928">
    <property type="entry name" value="DEXDc_SecA"/>
    <property type="match status" value="1"/>
</dbReference>
<dbReference type="CDD" id="cd18803">
    <property type="entry name" value="SF2_C_secA"/>
    <property type="match status" value="1"/>
</dbReference>
<dbReference type="FunFam" id="3.90.1440.10:FF:000001">
    <property type="entry name" value="Preprotein translocase subunit SecA"/>
    <property type="match status" value="1"/>
</dbReference>
<dbReference type="FunFam" id="1.10.3060.10:FF:000003">
    <property type="entry name" value="Protein translocase subunit SecA"/>
    <property type="match status" value="1"/>
</dbReference>
<dbReference type="FunFam" id="3.40.50.300:FF:000334">
    <property type="entry name" value="Protein translocase subunit SecA"/>
    <property type="match status" value="1"/>
</dbReference>
<dbReference type="FunFam" id="3.40.50.300:FF:001790">
    <property type="entry name" value="Protein translocase subunit SecA"/>
    <property type="match status" value="1"/>
</dbReference>
<dbReference type="Gene3D" id="1.10.3060.10">
    <property type="entry name" value="Helical scaffold and wing domains of SecA"/>
    <property type="match status" value="1"/>
</dbReference>
<dbReference type="Gene3D" id="3.40.50.300">
    <property type="entry name" value="P-loop containing nucleotide triphosphate hydrolases"/>
    <property type="match status" value="2"/>
</dbReference>
<dbReference type="Gene3D" id="3.90.1440.10">
    <property type="entry name" value="SecA, preprotein cross-linking domain"/>
    <property type="match status" value="1"/>
</dbReference>
<dbReference type="HAMAP" id="MF_01382">
    <property type="entry name" value="SecA"/>
    <property type="match status" value="1"/>
</dbReference>
<dbReference type="InterPro" id="IPR014001">
    <property type="entry name" value="Helicase_ATP-bd"/>
</dbReference>
<dbReference type="InterPro" id="IPR027417">
    <property type="entry name" value="P-loop_NTPase"/>
</dbReference>
<dbReference type="InterPro" id="IPR004027">
    <property type="entry name" value="SEC_C_motif"/>
</dbReference>
<dbReference type="InterPro" id="IPR000185">
    <property type="entry name" value="SecA"/>
</dbReference>
<dbReference type="InterPro" id="IPR020937">
    <property type="entry name" value="SecA_CS"/>
</dbReference>
<dbReference type="InterPro" id="IPR011115">
    <property type="entry name" value="SecA_DEAD"/>
</dbReference>
<dbReference type="InterPro" id="IPR014018">
    <property type="entry name" value="SecA_motor_DEAD"/>
</dbReference>
<dbReference type="InterPro" id="IPR011130">
    <property type="entry name" value="SecA_preprotein_X-link_dom"/>
</dbReference>
<dbReference type="InterPro" id="IPR044722">
    <property type="entry name" value="SecA_SF2_C"/>
</dbReference>
<dbReference type="InterPro" id="IPR011116">
    <property type="entry name" value="SecA_Wing/Scaffold"/>
</dbReference>
<dbReference type="InterPro" id="IPR036266">
    <property type="entry name" value="SecA_Wing/Scaffold_sf"/>
</dbReference>
<dbReference type="InterPro" id="IPR036670">
    <property type="entry name" value="SecA_X-link_sf"/>
</dbReference>
<dbReference type="NCBIfam" id="NF009538">
    <property type="entry name" value="PRK12904.1"/>
    <property type="match status" value="1"/>
</dbReference>
<dbReference type="NCBIfam" id="TIGR00963">
    <property type="entry name" value="secA"/>
    <property type="match status" value="1"/>
</dbReference>
<dbReference type="PANTHER" id="PTHR30612:SF0">
    <property type="entry name" value="CHLOROPLAST PROTEIN-TRANSPORTING ATPASE"/>
    <property type="match status" value="1"/>
</dbReference>
<dbReference type="PANTHER" id="PTHR30612">
    <property type="entry name" value="SECA INNER MEMBRANE COMPONENT OF SEC PROTEIN SECRETION SYSTEM"/>
    <property type="match status" value="1"/>
</dbReference>
<dbReference type="Pfam" id="PF21090">
    <property type="entry name" value="P-loop_SecA"/>
    <property type="match status" value="1"/>
</dbReference>
<dbReference type="Pfam" id="PF02810">
    <property type="entry name" value="SEC-C"/>
    <property type="match status" value="1"/>
</dbReference>
<dbReference type="Pfam" id="PF07517">
    <property type="entry name" value="SecA_DEAD"/>
    <property type="match status" value="1"/>
</dbReference>
<dbReference type="Pfam" id="PF01043">
    <property type="entry name" value="SecA_PP_bind"/>
    <property type="match status" value="1"/>
</dbReference>
<dbReference type="Pfam" id="PF07516">
    <property type="entry name" value="SecA_SW"/>
    <property type="match status" value="1"/>
</dbReference>
<dbReference type="PRINTS" id="PR00906">
    <property type="entry name" value="SECA"/>
</dbReference>
<dbReference type="SMART" id="SM00957">
    <property type="entry name" value="SecA_DEAD"/>
    <property type="match status" value="1"/>
</dbReference>
<dbReference type="SMART" id="SM00958">
    <property type="entry name" value="SecA_PP_bind"/>
    <property type="match status" value="1"/>
</dbReference>
<dbReference type="SUPFAM" id="SSF81886">
    <property type="entry name" value="Helical scaffold and wing domains of SecA"/>
    <property type="match status" value="1"/>
</dbReference>
<dbReference type="SUPFAM" id="SSF52540">
    <property type="entry name" value="P-loop containing nucleoside triphosphate hydrolases"/>
    <property type="match status" value="2"/>
</dbReference>
<dbReference type="SUPFAM" id="SSF81767">
    <property type="entry name" value="Pre-protein crosslinking domain of SecA"/>
    <property type="match status" value="1"/>
</dbReference>
<dbReference type="PROSITE" id="PS01312">
    <property type="entry name" value="SECA"/>
    <property type="match status" value="1"/>
</dbReference>
<dbReference type="PROSITE" id="PS51196">
    <property type="entry name" value="SECA_MOTOR_DEAD"/>
    <property type="match status" value="1"/>
</dbReference>
<feature type="chain" id="PRO_0000320745" description="Protein translocase subunit SecA">
    <location>
        <begin position="1"/>
        <end position="950"/>
    </location>
</feature>
<feature type="region of interest" description="Disordered" evidence="2">
    <location>
        <begin position="908"/>
        <end position="932"/>
    </location>
</feature>
<feature type="binding site" evidence="1">
    <location>
        <position position="87"/>
    </location>
    <ligand>
        <name>ATP</name>
        <dbReference type="ChEBI" id="CHEBI:30616"/>
    </ligand>
</feature>
<feature type="binding site" evidence="1">
    <location>
        <begin position="105"/>
        <end position="109"/>
    </location>
    <ligand>
        <name>ATP</name>
        <dbReference type="ChEBI" id="CHEBI:30616"/>
    </ligand>
</feature>
<feature type="binding site" evidence="1">
    <location>
        <position position="524"/>
    </location>
    <ligand>
        <name>ATP</name>
        <dbReference type="ChEBI" id="CHEBI:30616"/>
    </ligand>
</feature>
<feature type="binding site" evidence="1">
    <location>
        <position position="934"/>
    </location>
    <ligand>
        <name>Zn(2+)</name>
        <dbReference type="ChEBI" id="CHEBI:29105"/>
    </ligand>
</feature>
<feature type="binding site" evidence="1">
    <location>
        <position position="936"/>
    </location>
    <ligand>
        <name>Zn(2+)</name>
        <dbReference type="ChEBI" id="CHEBI:29105"/>
    </ligand>
</feature>
<feature type="binding site" evidence="1">
    <location>
        <position position="945"/>
    </location>
    <ligand>
        <name>Zn(2+)</name>
        <dbReference type="ChEBI" id="CHEBI:29105"/>
    </ligand>
</feature>
<feature type="binding site" evidence="1">
    <location>
        <position position="946"/>
    </location>
    <ligand>
        <name>Zn(2+)</name>
        <dbReference type="ChEBI" id="CHEBI:29105"/>
    </ligand>
</feature>